<proteinExistence type="evidence at transcript level"/>
<dbReference type="EMBL" id="M74776">
    <property type="protein sequence ID" value="AAA37065.1"/>
    <property type="molecule type" value="mRNA"/>
</dbReference>
<dbReference type="PIR" id="A60577">
    <property type="entry name" value="A60577"/>
</dbReference>
<dbReference type="RefSeq" id="NP_001268882.1">
    <property type="nucleotide sequence ID" value="NM_001281953.1"/>
</dbReference>
<dbReference type="SMR" id="Q60543"/>
<dbReference type="STRING" id="10036.ENSMAUP00000004916"/>
<dbReference type="MEROPS" id="I04.954"/>
<dbReference type="GlyCosmos" id="Q60543">
    <property type="glycosylation" value="4 sites, No reported glycans"/>
</dbReference>
<dbReference type="GeneID" id="101838201"/>
<dbReference type="KEGG" id="maua:101838201"/>
<dbReference type="CTD" id="866"/>
<dbReference type="eggNOG" id="KOG2392">
    <property type="taxonomic scope" value="Eukaryota"/>
</dbReference>
<dbReference type="OrthoDB" id="671595at2759"/>
<dbReference type="Proteomes" id="UP000189706">
    <property type="component" value="Unplaced"/>
</dbReference>
<dbReference type="GO" id="GO:0005615">
    <property type="term" value="C:extracellular space"/>
    <property type="evidence" value="ECO:0007669"/>
    <property type="project" value="InterPro"/>
</dbReference>
<dbReference type="GO" id="GO:0004867">
    <property type="term" value="F:serine-type endopeptidase inhibitor activity"/>
    <property type="evidence" value="ECO:0007669"/>
    <property type="project" value="InterPro"/>
</dbReference>
<dbReference type="GO" id="GO:0005496">
    <property type="term" value="F:steroid binding"/>
    <property type="evidence" value="ECO:0000250"/>
    <property type="project" value="UniProtKB"/>
</dbReference>
<dbReference type="CDD" id="cd19554">
    <property type="entry name" value="serpinA6_CBG"/>
    <property type="match status" value="1"/>
</dbReference>
<dbReference type="FunFam" id="3.30.497.10:FF:000001">
    <property type="entry name" value="Serine protease inhibitor"/>
    <property type="match status" value="1"/>
</dbReference>
<dbReference type="FunFam" id="2.30.39.10:FF:000002">
    <property type="entry name" value="Serpin family D member 1"/>
    <property type="match status" value="1"/>
</dbReference>
<dbReference type="Gene3D" id="2.30.39.10">
    <property type="entry name" value="Alpha-1-antitrypsin, domain 1"/>
    <property type="match status" value="1"/>
</dbReference>
<dbReference type="Gene3D" id="3.30.497.10">
    <property type="entry name" value="Antithrombin, subunit I, domain 2"/>
    <property type="match status" value="1"/>
</dbReference>
<dbReference type="InterPro" id="IPR023795">
    <property type="entry name" value="Serpin_CS"/>
</dbReference>
<dbReference type="InterPro" id="IPR023796">
    <property type="entry name" value="Serpin_dom"/>
</dbReference>
<dbReference type="InterPro" id="IPR000215">
    <property type="entry name" value="Serpin_fam"/>
</dbReference>
<dbReference type="InterPro" id="IPR036186">
    <property type="entry name" value="Serpin_sf"/>
</dbReference>
<dbReference type="InterPro" id="IPR042178">
    <property type="entry name" value="Serpin_sf_1"/>
</dbReference>
<dbReference type="InterPro" id="IPR042185">
    <property type="entry name" value="Serpin_sf_2"/>
</dbReference>
<dbReference type="PANTHER" id="PTHR11461:SF34">
    <property type="entry name" value="CORTICOSTEROID-BINDING GLOBULIN"/>
    <property type="match status" value="1"/>
</dbReference>
<dbReference type="PANTHER" id="PTHR11461">
    <property type="entry name" value="SERINE PROTEASE INHIBITOR, SERPIN"/>
    <property type="match status" value="1"/>
</dbReference>
<dbReference type="Pfam" id="PF00079">
    <property type="entry name" value="Serpin"/>
    <property type="match status" value="1"/>
</dbReference>
<dbReference type="SMART" id="SM00093">
    <property type="entry name" value="SERPIN"/>
    <property type="match status" value="1"/>
</dbReference>
<dbReference type="SUPFAM" id="SSF56574">
    <property type="entry name" value="Serpins"/>
    <property type="match status" value="1"/>
</dbReference>
<dbReference type="PROSITE" id="PS00284">
    <property type="entry name" value="SERPIN"/>
    <property type="match status" value="1"/>
</dbReference>
<protein>
    <recommendedName>
        <fullName>Corticosteroid-binding globulin</fullName>
        <shortName>CBG</shortName>
    </recommendedName>
    <alternativeName>
        <fullName>Serpin A6</fullName>
    </alternativeName>
    <alternativeName>
        <fullName>Transcortin</fullName>
    </alternativeName>
</protein>
<accession>Q60543</accession>
<name>CBG_MESAU</name>
<evidence type="ECO:0000250" key="1"/>
<evidence type="ECO:0000255" key="2"/>
<evidence type="ECO:0000305" key="3"/>
<keyword id="KW-0325">Glycoprotein</keyword>
<keyword id="KW-0446">Lipid-binding</keyword>
<keyword id="KW-1185">Reference proteome</keyword>
<keyword id="KW-0964">Secreted</keyword>
<keyword id="KW-0732">Signal</keyword>
<keyword id="KW-0754">Steroid-binding</keyword>
<keyword id="KW-0813">Transport</keyword>
<feature type="signal peptide" evidence="1">
    <location>
        <begin position="1"/>
        <end position="30"/>
    </location>
</feature>
<feature type="chain" id="PRO_0000032430" description="Corticosteroid-binding globulin">
    <location>
        <begin position="31"/>
        <end position="404"/>
    </location>
</feature>
<feature type="binding site" evidence="1">
    <location>
        <position position="253"/>
    </location>
    <ligand>
        <name>cortisol</name>
        <dbReference type="ChEBI" id="CHEBI:17650"/>
    </ligand>
</feature>
<feature type="binding site" evidence="1">
    <location>
        <position position="285"/>
    </location>
    <ligand>
        <name>cortisol</name>
        <dbReference type="ChEBI" id="CHEBI:17650"/>
    </ligand>
</feature>
<feature type="binding site" evidence="1">
    <location>
        <position position="392"/>
    </location>
    <ligand>
        <name>cortisol</name>
        <dbReference type="ChEBI" id="CHEBI:17650"/>
    </ligand>
</feature>
<feature type="site" description="Conserved cysteine within steroid binding domain" evidence="1">
    <location>
        <position position="249"/>
    </location>
</feature>
<feature type="glycosylation site" description="N-linked (GlcNAc...) asparagine" evidence="2">
    <location>
        <position position="95"/>
    </location>
</feature>
<feature type="glycosylation site" description="N-linked (GlcNAc...) asparagine" evidence="2">
    <location>
        <position position="225"/>
    </location>
</feature>
<feature type="glycosylation site" description="N-linked (GlcNAc...) asparagine" evidence="2">
    <location>
        <position position="259"/>
    </location>
</feature>
<feature type="glycosylation site" description="N-linked (GlcNAc...) asparagine" evidence="2">
    <location>
        <position position="326"/>
    </location>
</feature>
<sequence>MAWSTRTMMSLALYTCFLWLLTSGLKTVQSLHDSHRGLAPTNVDFAFNMYRHLSTLDPHKNILISPVSVSMALAMMSLVAVGSKKNQFFQDVGFNLTEISKEEIYQSFEKLSHLLSKADSSLEMRMGNTMFLDQSLNMRDSFLTDIEHYHESEALTTDFKDGADAREHINRHVETKTQGEITHVFSDQDSPAPLTLVNYNVLKGMWELPISPENTRDEDFHVSENSTVRVPMMFQSGVIGYLHDSEIPCQLVQMQYLKNGTTFFILPDEGQMDAVTAALHRDTVERWDKLLTKRLVNLYIPRVYMSGTYNLEDVLEGMGITGLFTNQTDFLDISQDPPQKASKIVHKVMLQLDEKDEPPVTTTEAPPQTTSEPLTLTFNKPFIIMMFDSFTWSSLLLGKIMNPA</sequence>
<reference key="1">
    <citation type="submission" date="1991-09" db="EMBL/GenBank/DDBJ databases">
        <title>Alternative signal peptide cleavage of corticosteroid binding globulin.</title>
        <authorList>
            <person name="Park C.G."/>
            <person name="Leavitt W.W."/>
        </authorList>
    </citation>
    <scope>NUCLEOTIDE SEQUENCE [MRNA]</scope>
    <source>
        <tissue>Liver</tissue>
    </source>
</reference>
<comment type="function">
    <text evidence="1">Major transport protein for glucocorticoids and progestins in the blood of almost all vertebrate species.</text>
</comment>
<comment type="subcellular location">
    <subcellularLocation>
        <location evidence="1">Secreted</location>
    </subcellularLocation>
</comment>
<comment type="tissue specificity">
    <text>Expressed by the liver; secreted in plasma.</text>
</comment>
<comment type="domain">
    <text evidence="1">Proteolytic cleavage leads to an important conformation change. This reduces the affinity for steroids (By similarity).</text>
</comment>
<comment type="similarity">
    <text evidence="3">Belongs to the serpin family.</text>
</comment>
<gene>
    <name type="primary">SERPINA6</name>
    <name type="synonym">CBG</name>
</gene>
<organism>
    <name type="scientific">Mesocricetus auratus</name>
    <name type="common">Golden hamster</name>
    <dbReference type="NCBI Taxonomy" id="10036"/>
    <lineage>
        <taxon>Eukaryota</taxon>
        <taxon>Metazoa</taxon>
        <taxon>Chordata</taxon>
        <taxon>Craniata</taxon>
        <taxon>Vertebrata</taxon>
        <taxon>Euteleostomi</taxon>
        <taxon>Mammalia</taxon>
        <taxon>Eutheria</taxon>
        <taxon>Euarchontoglires</taxon>
        <taxon>Glires</taxon>
        <taxon>Rodentia</taxon>
        <taxon>Myomorpha</taxon>
        <taxon>Muroidea</taxon>
        <taxon>Cricetidae</taxon>
        <taxon>Cricetinae</taxon>
        <taxon>Mesocricetus</taxon>
    </lineage>
</organism>